<name>SL9B1_HUMAN</name>
<reference key="1">
    <citation type="journal article" date="2006" name="Mol. Biol. Rep.">
        <title>Cloning of a novel human NHEDC1 (Na+/H+ exchanger like domain containing 1) gene expressed specifically in testis.</title>
        <authorList>
            <person name="Ye G.M."/>
            <person name="Chen C."/>
            <person name="Han D."/>
            <person name="Xiong X."/>
            <person name="Kong Y."/>
            <person name="Wan B."/>
            <person name="Yu L."/>
        </authorList>
    </citation>
    <scope>NUCLEOTIDE SEQUENCE [MRNA] (ISOFORM 1)</scope>
    <scope>TISSUE SPECIFICITY</scope>
    <scope>VARIANT HIS-33</scope>
    <source>
        <tissue>Testis</tissue>
    </source>
</reference>
<reference key="2">
    <citation type="submission" date="2001-10" db="EMBL/GenBank/DDBJ databases">
        <authorList>
            <person name="Guo J.H."/>
            <person name="Yu L."/>
        </authorList>
    </citation>
    <scope>NUCLEOTIDE SEQUENCE [LARGE SCALE MRNA] (ISOFORM 1)</scope>
    <scope>VARIANT HIS-33</scope>
    <source>
        <tissue>Testis</tissue>
    </source>
</reference>
<reference key="3">
    <citation type="submission" date="2003-10" db="EMBL/GenBank/DDBJ databases">
        <authorList>
            <person name="Li X."/>
            <person name="Xie Y."/>
            <person name="Mao Y."/>
        </authorList>
    </citation>
    <scope>NUCLEOTIDE SEQUENCE [LARGE SCALE MRNA] (ISOFORM 3)</scope>
    <scope>VARIANT HIS-33</scope>
</reference>
<reference key="4">
    <citation type="journal article" date="2005" name="Nature">
        <title>Generation and annotation of the DNA sequences of human chromosomes 2 and 4.</title>
        <authorList>
            <person name="Hillier L.W."/>
            <person name="Graves T.A."/>
            <person name="Fulton R.S."/>
            <person name="Fulton L.A."/>
            <person name="Pepin K.H."/>
            <person name="Minx P."/>
            <person name="Wagner-McPherson C."/>
            <person name="Layman D."/>
            <person name="Wylie K."/>
            <person name="Sekhon M."/>
            <person name="Becker M.C."/>
            <person name="Fewell G.A."/>
            <person name="Delehaunty K.D."/>
            <person name="Miner T.L."/>
            <person name="Nash W.E."/>
            <person name="Kremitzki C."/>
            <person name="Oddy L."/>
            <person name="Du H."/>
            <person name="Sun H."/>
            <person name="Bradshaw-Cordum H."/>
            <person name="Ali J."/>
            <person name="Carter J."/>
            <person name="Cordes M."/>
            <person name="Harris A."/>
            <person name="Isak A."/>
            <person name="van Brunt A."/>
            <person name="Nguyen C."/>
            <person name="Du F."/>
            <person name="Courtney L."/>
            <person name="Kalicki J."/>
            <person name="Ozersky P."/>
            <person name="Abbott S."/>
            <person name="Armstrong J."/>
            <person name="Belter E.A."/>
            <person name="Caruso L."/>
            <person name="Cedroni M."/>
            <person name="Cotton M."/>
            <person name="Davidson T."/>
            <person name="Desai A."/>
            <person name="Elliott G."/>
            <person name="Erb T."/>
            <person name="Fronick C."/>
            <person name="Gaige T."/>
            <person name="Haakenson W."/>
            <person name="Haglund K."/>
            <person name="Holmes A."/>
            <person name="Harkins R."/>
            <person name="Kim K."/>
            <person name="Kruchowski S.S."/>
            <person name="Strong C.M."/>
            <person name="Grewal N."/>
            <person name="Goyea E."/>
            <person name="Hou S."/>
            <person name="Levy A."/>
            <person name="Martinka S."/>
            <person name="Mead K."/>
            <person name="McLellan M.D."/>
            <person name="Meyer R."/>
            <person name="Randall-Maher J."/>
            <person name="Tomlinson C."/>
            <person name="Dauphin-Kohlberg S."/>
            <person name="Kozlowicz-Reilly A."/>
            <person name="Shah N."/>
            <person name="Swearengen-Shahid S."/>
            <person name="Snider J."/>
            <person name="Strong J.T."/>
            <person name="Thompson J."/>
            <person name="Yoakum M."/>
            <person name="Leonard S."/>
            <person name="Pearman C."/>
            <person name="Trani L."/>
            <person name="Radionenko M."/>
            <person name="Waligorski J.E."/>
            <person name="Wang C."/>
            <person name="Rock S.M."/>
            <person name="Tin-Wollam A.-M."/>
            <person name="Maupin R."/>
            <person name="Latreille P."/>
            <person name="Wendl M.C."/>
            <person name="Yang S.-P."/>
            <person name="Pohl C."/>
            <person name="Wallis J.W."/>
            <person name="Spieth J."/>
            <person name="Bieri T.A."/>
            <person name="Berkowicz N."/>
            <person name="Nelson J.O."/>
            <person name="Osborne J."/>
            <person name="Ding L."/>
            <person name="Meyer R."/>
            <person name="Sabo A."/>
            <person name="Shotland Y."/>
            <person name="Sinha P."/>
            <person name="Wohldmann P.E."/>
            <person name="Cook L.L."/>
            <person name="Hickenbotham M.T."/>
            <person name="Eldred J."/>
            <person name="Williams D."/>
            <person name="Jones T.A."/>
            <person name="She X."/>
            <person name="Ciccarelli F.D."/>
            <person name="Izaurralde E."/>
            <person name="Taylor J."/>
            <person name="Schmutz J."/>
            <person name="Myers R.M."/>
            <person name="Cox D.R."/>
            <person name="Huang X."/>
            <person name="McPherson J.D."/>
            <person name="Mardis E.R."/>
            <person name="Clifton S.W."/>
            <person name="Warren W.C."/>
            <person name="Chinwalla A.T."/>
            <person name="Eddy S.R."/>
            <person name="Marra M.A."/>
            <person name="Ovcharenko I."/>
            <person name="Furey T.S."/>
            <person name="Miller W."/>
            <person name="Eichler E.E."/>
            <person name="Bork P."/>
            <person name="Suyama M."/>
            <person name="Torrents D."/>
            <person name="Waterston R.H."/>
            <person name="Wilson R.K."/>
        </authorList>
    </citation>
    <scope>NUCLEOTIDE SEQUENCE [LARGE SCALE GENOMIC DNA]</scope>
</reference>
<reference key="5">
    <citation type="submission" date="2005-07" db="EMBL/GenBank/DDBJ databases">
        <authorList>
            <person name="Mural R.J."/>
            <person name="Istrail S."/>
            <person name="Sutton G.G."/>
            <person name="Florea L."/>
            <person name="Halpern A.L."/>
            <person name="Mobarry C.M."/>
            <person name="Lippert R."/>
            <person name="Walenz B."/>
            <person name="Shatkay H."/>
            <person name="Dew I."/>
            <person name="Miller J.R."/>
            <person name="Flanigan M.J."/>
            <person name="Edwards N.J."/>
            <person name="Bolanos R."/>
            <person name="Fasulo D."/>
            <person name="Halldorsson B.V."/>
            <person name="Hannenhalli S."/>
            <person name="Turner R."/>
            <person name="Yooseph S."/>
            <person name="Lu F."/>
            <person name="Nusskern D.R."/>
            <person name="Shue B.C."/>
            <person name="Zheng X.H."/>
            <person name="Zhong F."/>
            <person name="Delcher A.L."/>
            <person name="Huson D.H."/>
            <person name="Kravitz S.A."/>
            <person name="Mouchard L."/>
            <person name="Reinert K."/>
            <person name="Remington K.A."/>
            <person name="Clark A.G."/>
            <person name="Waterman M.S."/>
            <person name="Eichler E.E."/>
            <person name="Adams M.D."/>
            <person name="Hunkapiller M.W."/>
            <person name="Myers E.W."/>
            <person name="Venter J.C."/>
        </authorList>
    </citation>
    <scope>NUCLEOTIDE SEQUENCE [LARGE SCALE GENOMIC DNA]</scope>
    <scope>VARIANT HIS-33</scope>
</reference>
<reference key="6">
    <citation type="journal article" date="2004" name="Genome Res.">
        <title>The status, quality, and expansion of the NIH full-length cDNA project: the Mammalian Gene Collection (MGC).</title>
        <authorList>
            <consortium name="The MGC Project Team"/>
        </authorList>
    </citation>
    <scope>NUCLEOTIDE SEQUENCE [LARGE SCALE MRNA] (ISOFORMS 1; 2 AND 4)</scope>
    <scope>VARIANT HIS-33</scope>
    <source>
        <tissue>Brain</tissue>
        <tissue>Testis</tissue>
    </source>
</reference>
<proteinExistence type="evidence at protein level"/>
<feature type="chain" id="PRO_0000314007" description="Sodium/hydrogen exchanger 9B1">
    <location>
        <begin position="1"/>
        <end position="515"/>
    </location>
</feature>
<feature type="transmembrane region" description="Helical" evidence="2">
    <location>
        <begin position="66"/>
        <end position="86"/>
    </location>
</feature>
<feature type="transmembrane region" description="Helical" evidence="2">
    <location>
        <begin position="95"/>
        <end position="115"/>
    </location>
</feature>
<feature type="transmembrane region" description="Helical" evidence="2">
    <location>
        <begin position="116"/>
        <end position="136"/>
    </location>
</feature>
<feature type="transmembrane region" description="Helical" evidence="2">
    <location>
        <begin position="152"/>
        <end position="172"/>
    </location>
</feature>
<feature type="transmembrane region" description="Helical" evidence="2">
    <location>
        <begin position="187"/>
        <end position="207"/>
    </location>
</feature>
<feature type="transmembrane region" description="Helical" evidence="2">
    <location>
        <begin position="215"/>
        <end position="235"/>
    </location>
</feature>
<feature type="transmembrane region" description="Helical" evidence="2">
    <location>
        <begin position="260"/>
        <end position="280"/>
    </location>
</feature>
<feature type="transmembrane region" description="Helical" evidence="2">
    <location>
        <begin position="284"/>
        <end position="304"/>
    </location>
</feature>
<feature type="transmembrane region" description="Helical" evidence="2">
    <location>
        <begin position="337"/>
        <end position="357"/>
    </location>
</feature>
<feature type="transmembrane region" description="Helical" evidence="2">
    <location>
        <begin position="368"/>
        <end position="388"/>
    </location>
</feature>
<feature type="transmembrane region" description="Helical" evidence="2">
    <location>
        <begin position="407"/>
        <end position="427"/>
    </location>
</feature>
<feature type="transmembrane region" description="Helical" evidence="2">
    <location>
        <begin position="431"/>
        <end position="451"/>
    </location>
</feature>
<feature type="transmembrane region" description="Helical" evidence="2">
    <location>
        <begin position="472"/>
        <end position="492"/>
    </location>
</feature>
<feature type="region of interest" description="Disordered" evidence="3">
    <location>
        <begin position="1"/>
        <end position="32"/>
    </location>
</feature>
<feature type="compositionally biased region" description="Basic and acidic residues" evidence="3">
    <location>
        <begin position="1"/>
        <end position="10"/>
    </location>
</feature>
<feature type="compositionally biased region" description="Polar residues" evidence="3">
    <location>
        <begin position="16"/>
        <end position="32"/>
    </location>
</feature>
<feature type="splice variant" id="VSP_030175" description="In isoform 2." evidence="9">
    <location>
        <begin position="1"/>
        <end position="232"/>
    </location>
</feature>
<feature type="splice variant" id="VSP_030176" description="In isoform 4." evidence="9">
    <original>GVI</original>
    <variation>VLF</variation>
    <location>
        <begin position="71"/>
        <end position="73"/>
    </location>
</feature>
<feature type="splice variant" id="VSP_030177" description="In isoform 4." evidence="9">
    <location>
        <begin position="74"/>
        <end position="515"/>
    </location>
</feature>
<feature type="splice variant" id="VSP_030180" description="In isoform 2 and isoform 3." evidence="9 11">
    <original>AVLGPLALETARVSAPHLEPYAKDVMTVAFLAILITAPNGALLMGILGPKMLTRHYDPSKIKLQLSTLEHH</original>
    <variation>INQAILLLFLLREEWTNCKVAKKCEYTKERQ</variation>
    <location>
        <begin position="445"/>
        <end position="515"/>
    </location>
</feature>
<feature type="sequence variant" id="VAR_061370" description="In dbSNP:rs2715591." evidence="4 5 6 7 8">
    <original>Q</original>
    <variation>H</variation>
    <location>
        <position position="33"/>
    </location>
</feature>
<feature type="sequence conflict" description="In Ref. 3; AAS91021." evidence="12" ref="3">
    <original>I</original>
    <variation>T</variation>
    <location>
        <position position="292"/>
    </location>
</feature>
<gene>
    <name evidence="13" type="primary">SLC9B1</name>
    <name evidence="13" type="synonym">NHA1</name>
    <name evidence="10" type="synonym">NHEDC1</name>
</gene>
<dbReference type="EMBL" id="DQ003059">
    <property type="protein sequence ID" value="AAY21808.1"/>
    <property type="molecule type" value="mRNA"/>
</dbReference>
<dbReference type="EMBL" id="AF447585">
    <property type="protein sequence ID" value="AAM22868.1"/>
    <property type="status" value="ALT_FRAME"/>
    <property type="molecule type" value="mRNA"/>
</dbReference>
<dbReference type="EMBL" id="AY461581">
    <property type="protein sequence ID" value="AAS91021.1"/>
    <property type="molecule type" value="mRNA"/>
</dbReference>
<dbReference type="EMBL" id="AC018797">
    <property type="status" value="NOT_ANNOTATED_CDS"/>
    <property type="molecule type" value="Genomic_DNA"/>
</dbReference>
<dbReference type="EMBL" id="AC083826">
    <property type="status" value="NOT_ANNOTATED_CDS"/>
    <property type="molecule type" value="Genomic_DNA"/>
</dbReference>
<dbReference type="EMBL" id="CH471057">
    <property type="protein sequence ID" value="EAX06152.1"/>
    <property type="molecule type" value="Genomic_DNA"/>
</dbReference>
<dbReference type="EMBL" id="BC022079">
    <property type="status" value="NOT_ANNOTATED_CDS"/>
    <property type="molecule type" value="mRNA"/>
</dbReference>
<dbReference type="EMBL" id="BC046636">
    <property type="status" value="NOT_ANNOTATED_CDS"/>
    <property type="molecule type" value="mRNA"/>
</dbReference>
<dbReference type="EMBL" id="BC110794">
    <property type="protein sequence ID" value="AAI10795.1"/>
    <property type="molecule type" value="mRNA"/>
</dbReference>
<dbReference type="EMBL" id="BC132712">
    <property type="protein sequence ID" value="AAI32713.1"/>
    <property type="molecule type" value="mRNA"/>
</dbReference>
<dbReference type="EMBL" id="BC136966">
    <property type="protein sequence ID" value="AAI36967.1"/>
    <property type="molecule type" value="mRNA"/>
</dbReference>
<dbReference type="CCDS" id="CCDS34041.1">
    <molecule id="Q4ZJI4-1"/>
</dbReference>
<dbReference type="CCDS" id="CCDS47119.1">
    <molecule id="Q4ZJI4-3"/>
</dbReference>
<dbReference type="RefSeq" id="NP_001094344.2">
    <molecule id="Q4ZJI4-3"/>
    <property type="nucleotide sequence ID" value="NM_001100874.3"/>
</dbReference>
<dbReference type="RefSeq" id="NP_631912.3">
    <molecule id="Q4ZJI4-1"/>
    <property type="nucleotide sequence ID" value="NM_139173.4"/>
</dbReference>
<dbReference type="RefSeq" id="XP_006714156.1">
    <property type="nucleotide sequence ID" value="XM_006714093.3"/>
</dbReference>
<dbReference type="RefSeq" id="XP_011529924.1">
    <property type="nucleotide sequence ID" value="XM_011531622.1"/>
</dbReference>
<dbReference type="RefSeq" id="XP_011529925.1">
    <property type="nucleotide sequence ID" value="XM_011531623.1"/>
</dbReference>
<dbReference type="SMR" id="Q4ZJI4"/>
<dbReference type="BioGRID" id="127264">
    <property type="interactions" value="1"/>
</dbReference>
<dbReference type="FunCoup" id="Q4ZJI4">
    <property type="interactions" value="3"/>
</dbReference>
<dbReference type="IntAct" id="Q4ZJI4">
    <property type="interactions" value="1"/>
</dbReference>
<dbReference type="MINT" id="Q4ZJI4"/>
<dbReference type="STRING" id="9606.ENSP00000296422"/>
<dbReference type="TCDB" id="2.A.36.2.3">
    <property type="family name" value="the monovalent cation:proton antiporter-1 (cpa1) family"/>
</dbReference>
<dbReference type="GlyGen" id="Q4ZJI4">
    <property type="glycosylation" value="1 site, 1 O-linked glycan (1 site)"/>
</dbReference>
<dbReference type="iPTMnet" id="Q4ZJI4"/>
<dbReference type="PhosphoSitePlus" id="Q4ZJI4"/>
<dbReference type="BioMuta" id="SLC9B1"/>
<dbReference type="DMDM" id="296439240"/>
<dbReference type="MassIVE" id="Q4ZJI4"/>
<dbReference type="PaxDb" id="9606-ENSP00000296422"/>
<dbReference type="PeptideAtlas" id="Q4ZJI4"/>
<dbReference type="ProteomicsDB" id="62386">
    <molecule id="Q4ZJI4-1"/>
</dbReference>
<dbReference type="ProteomicsDB" id="62387">
    <molecule id="Q4ZJI4-2"/>
</dbReference>
<dbReference type="ProteomicsDB" id="62388">
    <molecule id="Q4ZJI4-3"/>
</dbReference>
<dbReference type="ProteomicsDB" id="62389">
    <molecule id="Q4ZJI4-5"/>
</dbReference>
<dbReference type="Antibodypedia" id="26068">
    <property type="antibodies" value="86 antibodies from 19 providers"/>
</dbReference>
<dbReference type="DNASU" id="150159"/>
<dbReference type="Ensembl" id="ENST00000296422.12">
    <molecule id="Q4ZJI4-1"/>
    <property type="protein sequence ID" value="ENSP00000296422.7"/>
    <property type="gene ID" value="ENSG00000164037.17"/>
</dbReference>
<dbReference type="Ensembl" id="ENST00000394789.7">
    <molecule id="Q4ZJI4-3"/>
    <property type="protein sequence ID" value="ENSP00000378269.3"/>
    <property type="gene ID" value="ENSG00000164037.17"/>
</dbReference>
<dbReference type="Ensembl" id="ENST00000503584.5">
    <molecule id="Q4ZJI4-5"/>
    <property type="protein sequence ID" value="ENSP00000426926.1"/>
    <property type="gene ID" value="ENSG00000164037.17"/>
</dbReference>
<dbReference type="Ensembl" id="ENST00000510243.5">
    <molecule id="Q4ZJI4-5"/>
    <property type="protein sequence ID" value="ENSP00000425913.1"/>
    <property type="gene ID" value="ENSG00000164037.17"/>
</dbReference>
<dbReference type="GeneID" id="150159"/>
<dbReference type="KEGG" id="hsa:150159"/>
<dbReference type="MANE-Select" id="ENST00000296422.12">
    <property type="protein sequence ID" value="ENSP00000296422.7"/>
    <property type="RefSeq nucleotide sequence ID" value="NM_139173.4"/>
    <property type="RefSeq protein sequence ID" value="NP_631912.3"/>
</dbReference>
<dbReference type="UCSC" id="uc003hwu.4">
    <molecule id="Q4ZJI4-1"/>
    <property type="organism name" value="human"/>
</dbReference>
<dbReference type="AGR" id="HGNC:24244"/>
<dbReference type="CTD" id="150159"/>
<dbReference type="DisGeNET" id="150159"/>
<dbReference type="GeneCards" id="SLC9B1"/>
<dbReference type="HGNC" id="HGNC:24244">
    <property type="gene designation" value="SLC9B1"/>
</dbReference>
<dbReference type="HPA" id="ENSG00000164037">
    <property type="expression patterns" value="Tissue enriched (testis)"/>
</dbReference>
<dbReference type="MalaCards" id="SLC9B1"/>
<dbReference type="MIM" id="611527">
    <property type="type" value="gene"/>
</dbReference>
<dbReference type="neXtProt" id="NX_Q4ZJI4"/>
<dbReference type="OpenTargets" id="ENSG00000164037"/>
<dbReference type="PharmGKB" id="PA162397486"/>
<dbReference type="VEuPathDB" id="HostDB:ENSG00000164037"/>
<dbReference type="eggNOG" id="KOG3826">
    <property type="taxonomic scope" value="Eukaryota"/>
</dbReference>
<dbReference type="GeneTree" id="ENSGT00390000013285"/>
<dbReference type="HOGENOM" id="CLU_201317_0_0_1"/>
<dbReference type="InParanoid" id="Q4ZJI4"/>
<dbReference type="OMA" id="VTTHYLL"/>
<dbReference type="OrthoDB" id="423807at2759"/>
<dbReference type="PAN-GO" id="Q4ZJI4">
    <property type="GO annotations" value="0 GO annotations based on evolutionary models"/>
</dbReference>
<dbReference type="PhylomeDB" id="Q4ZJI4"/>
<dbReference type="TreeFam" id="TF319087"/>
<dbReference type="PathwayCommons" id="Q4ZJI4"/>
<dbReference type="Reactome" id="R-HSA-2672351">
    <property type="pathway name" value="Stimuli-sensing channels"/>
</dbReference>
<dbReference type="BioGRID-ORCS" id="150159">
    <property type="hits" value="372 hits in 1059 CRISPR screens"/>
</dbReference>
<dbReference type="ChiTaRS" id="SLC9B1">
    <property type="organism name" value="human"/>
</dbReference>
<dbReference type="GenomeRNAi" id="150159"/>
<dbReference type="Pharos" id="Q4ZJI4">
    <property type="development level" value="Tbio"/>
</dbReference>
<dbReference type="PRO" id="PR:Q4ZJI4"/>
<dbReference type="Proteomes" id="UP000005640">
    <property type="component" value="Chromosome 4"/>
</dbReference>
<dbReference type="RNAct" id="Q4ZJI4">
    <property type="molecule type" value="protein"/>
</dbReference>
<dbReference type="Bgee" id="ENSG00000164037">
    <property type="expression patterns" value="Expressed in sperm and 96 other cell types or tissues"/>
</dbReference>
<dbReference type="ExpressionAtlas" id="Q4ZJI4">
    <property type="expression patterns" value="baseline and differential"/>
</dbReference>
<dbReference type="GO" id="GO:0005886">
    <property type="term" value="C:plasma membrane"/>
    <property type="evidence" value="ECO:0000304"/>
    <property type="project" value="Reactome"/>
</dbReference>
<dbReference type="GO" id="GO:0097228">
    <property type="term" value="C:sperm principal piece"/>
    <property type="evidence" value="ECO:0000250"/>
    <property type="project" value="UniProtKB"/>
</dbReference>
<dbReference type="GO" id="GO:0015385">
    <property type="term" value="F:sodium:proton antiporter activity"/>
    <property type="evidence" value="ECO:0000304"/>
    <property type="project" value="Reactome"/>
</dbReference>
<dbReference type="GO" id="GO:0030317">
    <property type="term" value="P:flagellated sperm motility"/>
    <property type="evidence" value="ECO:0000250"/>
    <property type="project" value="UniProtKB"/>
</dbReference>
<dbReference type="GO" id="GO:0098662">
    <property type="term" value="P:inorganic cation transmembrane transport"/>
    <property type="evidence" value="ECO:0000318"/>
    <property type="project" value="GO_Central"/>
</dbReference>
<dbReference type="GO" id="GO:0034220">
    <property type="term" value="P:monoatomic ion transmembrane transport"/>
    <property type="evidence" value="ECO:0000304"/>
    <property type="project" value="Reactome"/>
</dbReference>
<dbReference type="GO" id="GO:0051453">
    <property type="term" value="P:regulation of intracellular pH"/>
    <property type="evidence" value="ECO:0000250"/>
    <property type="project" value="UniProtKB"/>
</dbReference>
<dbReference type="GO" id="GO:0007338">
    <property type="term" value="P:single fertilization"/>
    <property type="evidence" value="ECO:0007669"/>
    <property type="project" value="UniProtKB-KW"/>
</dbReference>
<dbReference type="FunFam" id="1.20.1530.20:FF:000012">
    <property type="entry name" value="sodium/hydrogen exchanger 9B2 isoform X1"/>
    <property type="match status" value="1"/>
</dbReference>
<dbReference type="Gene3D" id="1.20.1530.20">
    <property type="match status" value="1"/>
</dbReference>
<dbReference type="InterPro" id="IPR006153">
    <property type="entry name" value="Cation/H_exchanger_TM"/>
</dbReference>
<dbReference type="InterPro" id="IPR051843">
    <property type="entry name" value="CPA1_transporter"/>
</dbReference>
<dbReference type="InterPro" id="IPR038770">
    <property type="entry name" value="Na+/solute_symporter_sf"/>
</dbReference>
<dbReference type="PANTHER" id="PTHR31102">
    <property type="match status" value="1"/>
</dbReference>
<dbReference type="PANTHER" id="PTHR31102:SF5">
    <property type="entry name" value="SLC9B1-LIKE PROTEIN SLC9B1P1-RELATED"/>
    <property type="match status" value="1"/>
</dbReference>
<dbReference type="Pfam" id="PF00999">
    <property type="entry name" value="Na_H_Exchanger"/>
    <property type="match status" value="1"/>
</dbReference>
<sequence length="515" mass="56054">MHTTESKNEHLEDENFQTSTTPQSLIDPNNTAQEETKTVLSDTEEIKPQTKKETYISCPLRGVLNVIITNGVILFVIWCMTWSILGSEALPGGNLFGLFIIFYSAIIGGKILQLIRIPLVPPLPPLLGMLLAGFTIRNVPFINEHVHVPNTWSSILRSIALTIILIRAGLGLDPQALRHLKVVCFRLAVGPCLMEASAAAVFSHFIMKFPWQWAFLLGFVLGAVSPAVVVPYMMVLQENGYGVEEGIPTLLMAASSMDDILAITGFNTCLSIVFSSGGILNNAIASIRNVCISLLAGIVLGFFVRYFPSEDQKKLTLKRGFLVLTMCVSAVLGSQRIGLHGSGGLCTLVLSFIAGTKWSQEKMKVQKIITTVWDIFQPLLFGLVGAEVSVSSLESNIVGISVATLSLALCVRILTTYLLMCFAGFSFKEKIFIALAWMPKATVQAVLGPLALETARVSAPHLEPYAKDVMTVAFLAILITAPNGALLMGILGPKMLTRHYDPSKIKLQLSTLEHH</sequence>
<comment type="function">
    <text evidence="1">Sperm-specific Na(+)/H(+) exchanger involved in intracellular pH regulation of spermatozoa. Involved in sperm motility and fertility.</text>
</comment>
<comment type="subcellular location">
    <subcellularLocation>
        <location evidence="1">Cell projection</location>
        <location evidence="1">Cilium</location>
        <location evidence="1">Flagellum membrane</location>
        <topology evidence="2">Multi-pass membrane protein</topology>
    </subcellularLocation>
</comment>
<comment type="alternative products">
    <event type="alternative splicing"/>
    <isoform>
        <id>Q4ZJI4-1</id>
        <name>1</name>
        <sequence type="displayed"/>
    </isoform>
    <isoform>
        <id>Q4ZJI4-2</id>
        <name>2</name>
        <sequence type="described" ref="VSP_030175 VSP_030180"/>
    </isoform>
    <isoform>
        <id>Q4ZJI4-3</id>
        <name>3</name>
        <sequence type="described" ref="VSP_030180"/>
    </isoform>
    <isoform>
        <id>Q4ZJI4-5</id>
        <name>4</name>
        <sequence type="described" ref="VSP_030176 VSP_030177"/>
    </isoform>
</comment>
<comment type="tissue specificity">
    <text evidence="5">Expressed only in the testis.</text>
</comment>
<comment type="miscellaneous">
    <molecule>Isoform 2</molecule>
    <text evidence="12">May be produced at very low levels due to a premature stop codon in the mRNA, leading to nonsense-mediated mRNA decay.</text>
</comment>
<comment type="miscellaneous">
    <molecule>Isoform 4</molecule>
    <text evidence="12">May be produced at very low levels due to a premature stop codon in the mRNA, leading to nonsense-mediated mRNA decay.</text>
</comment>
<comment type="similarity">
    <text evidence="12">Belongs to the monovalent cation:proton antiporter 1 (CPA1) transporter (TC 2.A.36) family.</text>
</comment>
<comment type="sequence caution" evidence="12">
    <conflict type="frameshift">
        <sequence resource="EMBL-CDS" id="AAM22868"/>
    </conflict>
</comment>
<organism>
    <name type="scientific">Homo sapiens</name>
    <name type="common">Human</name>
    <dbReference type="NCBI Taxonomy" id="9606"/>
    <lineage>
        <taxon>Eukaryota</taxon>
        <taxon>Metazoa</taxon>
        <taxon>Chordata</taxon>
        <taxon>Craniata</taxon>
        <taxon>Vertebrata</taxon>
        <taxon>Euteleostomi</taxon>
        <taxon>Mammalia</taxon>
        <taxon>Eutheria</taxon>
        <taxon>Euarchontoglires</taxon>
        <taxon>Primates</taxon>
        <taxon>Haplorrhini</taxon>
        <taxon>Catarrhini</taxon>
        <taxon>Hominidae</taxon>
        <taxon>Homo</taxon>
    </lineage>
</organism>
<protein>
    <recommendedName>
        <fullName>Sodium/hydrogen exchanger 9B1</fullName>
    </recommendedName>
    <alternativeName>
        <fullName>Na(+)/H(+) exchanger-like domain-containing protein 1</fullName>
        <shortName>NHE domain-containing protein 1</shortName>
    </alternativeName>
    <alternativeName>
        <fullName evidence="10">Sodium/hydrogen exchanger-like domain-containing protein 1</fullName>
    </alternativeName>
    <alternativeName>
        <fullName>Solute carrier family 9, subfamily B member 1</fullName>
    </alternativeName>
</protein>
<evidence type="ECO:0000250" key="1">
    <source>
        <dbReference type="UniProtKB" id="Q8C0X2"/>
    </source>
</evidence>
<evidence type="ECO:0000255" key="2"/>
<evidence type="ECO:0000256" key="3">
    <source>
        <dbReference type="SAM" id="MobiDB-lite"/>
    </source>
</evidence>
<evidence type="ECO:0000269" key="4">
    <source>
    </source>
</evidence>
<evidence type="ECO:0000269" key="5">
    <source>
    </source>
</evidence>
<evidence type="ECO:0000269" key="6">
    <source ref="2"/>
</evidence>
<evidence type="ECO:0000269" key="7">
    <source ref="3"/>
</evidence>
<evidence type="ECO:0000269" key="8">
    <source ref="5"/>
</evidence>
<evidence type="ECO:0000303" key="9">
    <source>
    </source>
</evidence>
<evidence type="ECO:0000303" key="10">
    <source>
    </source>
</evidence>
<evidence type="ECO:0000303" key="11">
    <source ref="3"/>
</evidence>
<evidence type="ECO:0000305" key="12"/>
<evidence type="ECO:0000312" key="13">
    <source>
        <dbReference type="HGNC" id="HGNC:24244"/>
    </source>
</evidence>
<keyword id="KW-0025">Alternative splicing</keyword>
<keyword id="KW-0050">Antiport</keyword>
<keyword id="KW-1003">Cell membrane</keyword>
<keyword id="KW-0966">Cell projection</keyword>
<keyword id="KW-0969">Cilium</keyword>
<keyword id="KW-0278">Fertilization</keyword>
<keyword id="KW-0282">Flagellum</keyword>
<keyword id="KW-0406">Ion transport</keyword>
<keyword id="KW-0472">Membrane</keyword>
<keyword id="KW-1267">Proteomics identification</keyword>
<keyword id="KW-1185">Reference proteome</keyword>
<keyword id="KW-0915">Sodium</keyword>
<keyword id="KW-0739">Sodium transport</keyword>
<keyword id="KW-0812">Transmembrane</keyword>
<keyword id="KW-1133">Transmembrane helix</keyword>
<keyword id="KW-0813">Transport</keyword>
<accession>Q4ZJI4</accession>
<accession>A1KXV1</accession>
<accession>B9EH04</accession>
<accession>C9JBP7</accession>
<accession>Q49A30</accession>
<accession>Q8NCV2</accession>
<accession>Q8WVZ0</accession>